<sequence>SANAKNDFMRF</sequence>
<protein>
    <recommendedName>
        <fullName>FMRFamide-19</fullName>
    </recommendedName>
    <alternativeName>
        <fullName evidence="3">LucFMRFamide-19</fullName>
    </alternativeName>
</protein>
<keyword id="KW-0027">Amidation</keyword>
<keyword id="KW-0903">Direct protein sequencing</keyword>
<keyword id="KW-0527">Neuropeptide</keyword>
<keyword id="KW-0964">Secreted</keyword>
<feature type="peptide" id="PRO_0000371760" description="FMRFamide-19">
    <location>
        <begin position="1"/>
        <end position="11"/>
    </location>
</feature>
<feature type="modified residue" description="Phenylalanine amide" evidence="2">
    <location>
        <position position="11"/>
    </location>
</feature>
<dbReference type="GO" id="GO:0005576">
    <property type="term" value="C:extracellular region"/>
    <property type="evidence" value="ECO:0007669"/>
    <property type="project" value="UniProtKB-SubCell"/>
</dbReference>
<dbReference type="GO" id="GO:0007218">
    <property type="term" value="P:neuropeptide signaling pathway"/>
    <property type="evidence" value="ECO:0007669"/>
    <property type="project" value="UniProtKB-KW"/>
</dbReference>
<organism>
    <name type="scientific">Lucilia cuprina</name>
    <name type="common">Green bottle fly</name>
    <name type="synonym">Australian sheep blowfly</name>
    <dbReference type="NCBI Taxonomy" id="7375"/>
    <lineage>
        <taxon>Eukaryota</taxon>
        <taxon>Metazoa</taxon>
        <taxon>Ecdysozoa</taxon>
        <taxon>Arthropoda</taxon>
        <taxon>Hexapoda</taxon>
        <taxon>Insecta</taxon>
        <taxon>Pterygota</taxon>
        <taxon>Neoptera</taxon>
        <taxon>Endopterygota</taxon>
        <taxon>Diptera</taxon>
        <taxon>Brachycera</taxon>
        <taxon>Muscomorpha</taxon>
        <taxon>Oestroidea</taxon>
        <taxon>Calliphoridae</taxon>
        <taxon>Luciliinae</taxon>
        <taxon>Lucilia</taxon>
    </lineage>
</organism>
<evidence type="ECO:0000255" key="1"/>
<evidence type="ECO:0000269" key="2">
    <source>
    </source>
</evidence>
<evidence type="ECO:0000303" key="3">
    <source>
    </source>
</evidence>
<evidence type="ECO:0000305" key="4"/>
<reference evidence="4" key="1">
    <citation type="journal article" date="2009" name="Gen. Comp. Endocrinol.">
        <title>Extended FMRFamides in dipteran insects: conservative expression in the neuroendocrine system is accompanied by rapid sequence evolution.</title>
        <authorList>
            <person name="Rahman M.M."/>
            <person name="Fromm B."/>
            <person name="Neupert S."/>
            <person name="Kreusch S."/>
            <person name="Predel R."/>
        </authorList>
    </citation>
    <scope>PROTEIN SEQUENCE</scope>
    <scope>TISSUE SPECIFICITY</scope>
    <scope>MASS SPECTROMETRY</scope>
    <scope>AMIDATION AT PHE-11</scope>
    <source>
        <strain evidence="2">Goondiwindi</strain>
        <tissue evidence="2">Dorsal ganglionic sheath</tissue>
    </source>
</reference>
<comment type="subcellular location">
    <subcellularLocation>
        <location evidence="4">Secreted</location>
    </subcellularLocation>
</comment>
<comment type="tissue specificity">
    <text evidence="2">Detected in the thoracic perisympathetic organs in larvae, and the dorsal ganglionic sheath in adults (at protein level).</text>
</comment>
<comment type="mass spectrometry"/>
<comment type="similarity">
    <text evidence="1">Belongs to the FARP (FMRFamide related peptide) family.</text>
</comment>
<name>FAR19_LUCCU</name>
<proteinExistence type="evidence at protein level"/>
<accession>P85463</accession>